<dbReference type="EMBL" id="CP000746">
    <property type="protein sequence ID" value="ABR74488.1"/>
    <property type="molecule type" value="Genomic_DNA"/>
</dbReference>
<dbReference type="RefSeq" id="WP_012072865.1">
    <property type="nucleotide sequence ID" value="NC_009655.1"/>
</dbReference>
<dbReference type="SMR" id="A6VNE1"/>
<dbReference type="STRING" id="339671.Asuc_1122"/>
<dbReference type="KEGG" id="asu:Asuc_1122"/>
<dbReference type="eggNOG" id="COG0858">
    <property type="taxonomic scope" value="Bacteria"/>
</dbReference>
<dbReference type="HOGENOM" id="CLU_089475_5_0_6"/>
<dbReference type="OrthoDB" id="307788at2"/>
<dbReference type="Proteomes" id="UP000001114">
    <property type="component" value="Chromosome"/>
</dbReference>
<dbReference type="GO" id="GO:0005829">
    <property type="term" value="C:cytosol"/>
    <property type="evidence" value="ECO:0007669"/>
    <property type="project" value="TreeGrafter"/>
</dbReference>
<dbReference type="GO" id="GO:0043024">
    <property type="term" value="F:ribosomal small subunit binding"/>
    <property type="evidence" value="ECO:0007669"/>
    <property type="project" value="TreeGrafter"/>
</dbReference>
<dbReference type="GO" id="GO:0030490">
    <property type="term" value="P:maturation of SSU-rRNA"/>
    <property type="evidence" value="ECO:0007669"/>
    <property type="project" value="UniProtKB-UniRule"/>
</dbReference>
<dbReference type="FunFam" id="3.30.300.20:FF:000007">
    <property type="entry name" value="Ribosome-binding factor A"/>
    <property type="match status" value="1"/>
</dbReference>
<dbReference type="Gene3D" id="3.30.300.20">
    <property type="match status" value="1"/>
</dbReference>
<dbReference type="HAMAP" id="MF_00003">
    <property type="entry name" value="RbfA"/>
    <property type="match status" value="1"/>
</dbReference>
<dbReference type="InterPro" id="IPR015946">
    <property type="entry name" value="KH_dom-like_a/b"/>
</dbReference>
<dbReference type="InterPro" id="IPR000238">
    <property type="entry name" value="RbfA"/>
</dbReference>
<dbReference type="InterPro" id="IPR023799">
    <property type="entry name" value="RbfA_dom_sf"/>
</dbReference>
<dbReference type="InterPro" id="IPR020053">
    <property type="entry name" value="Ribosome-bd_factorA_CS"/>
</dbReference>
<dbReference type="NCBIfam" id="TIGR00082">
    <property type="entry name" value="rbfA"/>
    <property type="match status" value="1"/>
</dbReference>
<dbReference type="PANTHER" id="PTHR33515">
    <property type="entry name" value="RIBOSOME-BINDING FACTOR A, CHLOROPLASTIC-RELATED"/>
    <property type="match status" value="1"/>
</dbReference>
<dbReference type="PANTHER" id="PTHR33515:SF1">
    <property type="entry name" value="RIBOSOME-BINDING FACTOR A, CHLOROPLASTIC-RELATED"/>
    <property type="match status" value="1"/>
</dbReference>
<dbReference type="Pfam" id="PF02033">
    <property type="entry name" value="RBFA"/>
    <property type="match status" value="1"/>
</dbReference>
<dbReference type="SUPFAM" id="SSF89919">
    <property type="entry name" value="Ribosome-binding factor A, RbfA"/>
    <property type="match status" value="1"/>
</dbReference>
<dbReference type="PROSITE" id="PS01319">
    <property type="entry name" value="RBFA"/>
    <property type="match status" value="1"/>
</dbReference>
<reference key="1">
    <citation type="journal article" date="2010" name="BMC Genomics">
        <title>A genomic perspective on the potential of Actinobacillus succinogenes for industrial succinate production.</title>
        <authorList>
            <person name="McKinlay J.B."/>
            <person name="Laivenieks M."/>
            <person name="Schindler B.D."/>
            <person name="McKinlay A.A."/>
            <person name="Siddaramappa S."/>
            <person name="Challacombe J.F."/>
            <person name="Lowry S.R."/>
            <person name="Clum A."/>
            <person name="Lapidus A.L."/>
            <person name="Burkhart K.B."/>
            <person name="Harkins V."/>
            <person name="Vieille C."/>
        </authorList>
    </citation>
    <scope>NUCLEOTIDE SEQUENCE [LARGE SCALE GENOMIC DNA]</scope>
    <source>
        <strain>ATCC 55618 / DSM 22257 / CCUG 43843 / 130Z</strain>
    </source>
</reference>
<proteinExistence type="inferred from homology"/>
<keyword id="KW-0963">Cytoplasm</keyword>
<keyword id="KW-1185">Reference proteome</keyword>
<keyword id="KW-0690">Ribosome biogenesis</keyword>
<comment type="function">
    <text evidence="1">One of several proteins that assist in the late maturation steps of the functional core of the 30S ribosomal subunit. Associates with free 30S ribosomal subunits (but not with 30S subunits that are part of 70S ribosomes or polysomes). Required for efficient processing of 16S rRNA. May interact with the 5'-terminal helix region of 16S rRNA.</text>
</comment>
<comment type="subunit">
    <text evidence="1">Monomer. Binds 30S ribosomal subunits, but not 50S ribosomal subunits or 70S ribosomes.</text>
</comment>
<comment type="subcellular location">
    <subcellularLocation>
        <location evidence="1">Cytoplasm</location>
    </subcellularLocation>
</comment>
<comment type="similarity">
    <text evidence="1">Belongs to the RbfA family.</text>
</comment>
<feature type="chain" id="PRO_1000070903" description="Ribosome-binding factor A">
    <location>
        <begin position="1"/>
        <end position="129"/>
    </location>
</feature>
<gene>
    <name evidence="1" type="primary">rbfA</name>
    <name type="ordered locus">Asuc_1122</name>
</gene>
<accession>A6VNE1</accession>
<name>RBFA_ACTSZ</name>
<sequence>MAREFKRSDRVAQELQKEVAVILQREVKDPRIGMVTVSDVEVSRDLAYAKIFVTFLFDNDPEAIKQGMKGLEKAAPYIRSLLGKAMRLRIVPELRFVYDQSLVEGMRMSNLVSNVIKNDEAKHVAEDSE</sequence>
<protein>
    <recommendedName>
        <fullName evidence="1">Ribosome-binding factor A</fullName>
    </recommendedName>
</protein>
<evidence type="ECO:0000255" key="1">
    <source>
        <dbReference type="HAMAP-Rule" id="MF_00003"/>
    </source>
</evidence>
<organism>
    <name type="scientific">Actinobacillus succinogenes (strain ATCC 55618 / DSM 22257 / CCUG 43843 / 130Z)</name>
    <dbReference type="NCBI Taxonomy" id="339671"/>
    <lineage>
        <taxon>Bacteria</taxon>
        <taxon>Pseudomonadati</taxon>
        <taxon>Pseudomonadota</taxon>
        <taxon>Gammaproteobacteria</taxon>
        <taxon>Pasteurellales</taxon>
        <taxon>Pasteurellaceae</taxon>
        <taxon>Actinobacillus</taxon>
    </lineage>
</organism>